<sequence length="118" mass="13233">MYKRSDKVAEAIHELVSGLLVKGLKDPRIGFVTITGVKVSDDIRHATIYYTVMGSDEAKKSTLHGLNSSVGFIRKEVSKELRLRFAPELIFKYDESIEYGNRIDQLLKEIGSEEGGND</sequence>
<keyword id="KW-0963">Cytoplasm</keyword>
<keyword id="KW-1185">Reference proteome</keyword>
<keyword id="KW-0690">Ribosome biogenesis</keyword>
<organism>
    <name type="scientific">Geobacter metallireducens (strain ATCC 53774 / DSM 7210 / GS-15)</name>
    <dbReference type="NCBI Taxonomy" id="269799"/>
    <lineage>
        <taxon>Bacteria</taxon>
        <taxon>Pseudomonadati</taxon>
        <taxon>Thermodesulfobacteriota</taxon>
        <taxon>Desulfuromonadia</taxon>
        <taxon>Geobacterales</taxon>
        <taxon>Geobacteraceae</taxon>
        <taxon>Geobacter</taxon>
    </lineage>
</organism>
<comment type="function">
    <text evidence="1">One of several proteins that assist in the late maturation steps of the functional core of the 30S ribosomal subunit. Associates with free 30S ribosomal subunits (but not with 30S subunits that are part of 70S ribosomes or polysomes). Required for efficient processing of 16S rRNA. May interact with the 5'-terminal helix region of 16S rRNA.</text>
</comment>
<comment type="subunit">
    <text evidence="1">Monomer. Binds 30S ribosomal subunits, but not 50S ribosomal subunits or 70S ribosomes.</text>
</comment>
<comment type="subcellular location">
    <subcellularLocation>
        <location evidence="1">Cytoplasm</location>
    </subcellularLocation>
</comment>
<comment type="similarity">
    <text evidence="1">Belongs to the RbfA family.</text>
</comment>
<evidence type="ECO:0000255" key="1">
    <source>
        <dbReference type="HAMAP-Rule" id="MF_00003"/>
    </source>
</evidence>
<name>RBFA_GEOMG</name>
<dbReference type="EMBL" id="CP000148">
    <property type="protein sequence ID" value="ABB31819.1"/>
    <property type="molecule type" value="Genomic_DNA"/>
</dbReference>
<dbReference type="RefSeq" id="WP_004511478.1">
    <property type="nucleotide sequence ID" value="NC_007517.1"/>
</dbReference>
<dbReference type="SMR" id="Q39VA5"/>
<dbReference type="STRING" id="269799.Gmet_1587"/>
<dbReference type="KEGG" id="gme:Gmet_1587"/>
<dbReference type="eggNOG" id="COG0858">
    <property type="taxonomic scope" value="Bacteria"/>
</dbReference>
<dbReference type="HOGENOM" id="CLU_089475_6_3_7"/>
<dbReference type="Proteomes" id="UP000007073">
    <property type="component" value="Chromosome"/>
</dbReference>
<dbReference type="GO" id="GO:0005829">
    <property type="term" value="C:cytosol"/>
    <property type="evidence" value="ECO:0007669"/>
    <property type="project" value="TreeGrafter"/>
</dbReference>
<dbReference type="GO" id="GO:0043024">
    <property type="term" value="F:ribosomal small subunit binding"/>
    <property type="evidence" value="ECO:0007669"/>
    <property type="project" value="TreeGrafter"/>
</dbReference>
<dbReference type="GO" id="GO:0030490">
    <property type="term" value="P:maturation of SSU-rRNA"/>
    <property type="evidence" value="ECO:0007669"/>
    <property type="project" value="UniProtKB-UniRule"/>
</dbReference>
<dbReference type="Gene3D" id="3.30.300.20">
    <property type="match status" value="1"/>
</dbReference>
<dbReference type="HAMAP" id="MF_00003">
    <property type="entry name" value="RbfA"/>
    <property type="match status" value="1"/>
</dbReference>
<dbReference type="InterPro" id="IPR015946">
    <property type="entry name" value="KH_dom-like_a/b"/>
</dbReference>
<dbReference type="InterPro" id="IPR000238">
    <property type="entry name" value="RbfA"/>
</dbReference>
<dbReference type="InterPro" id="IPR023799">
    <property type="entry name" value="RbfA_dom_sf"/>
</dbReference>
<dbReference type="InterPro" id="IPR020053">
    <property type="entry name" value="Ribosome-bd_factorA_CS"/>
</dbReference>
<dbReference type="NCBIfam" id="NF010388">
    <property type="entry name" value="PRK13815.1"/>
    <property type="match status" value="1"/>
</dbReference>
<dbReference type="NCBIfam" id="TIGR00082">
    <property type="entry name" value="rbfA"/>
    <property type="match status" value="1"/>
</dbReference>
<dbReference type="PANTHER" id="PTHR33515">
    <property type="entry name" value="RIBOSOME-BINDING FACTOR A, CHLOROPLASTIC-RELATED"/>
    <property type="match status" value="1"/>
</dbReference>
<dbReference type="PANTHER" id="PTHR33515:SF1">
    <property type="entry name" value="RIBOSOME-BINDING FACTOR A, CHLOROPLASTIC-RELATED"/>
    <property type="match status" value="1"/>
</dbReference>
<dbReference type="Pfam" id="PF02033">
    <property type="entry name" value="RBFA"/>
    <property type="match status" value="1"/>
</dbReference>
<dbReference type="SUPFAM" id="SSF89919">
    <property type="entry name" value="Ribosome-binding factor A, RbfA"/>
    <property type="match status" value="1"/>
</dbReference>
<dbReference type="PROSITE" id="PS01319">
    <property type="entry name" value="RBFA"/>
    <property type="match status" value="1"/>
</dbReference>
<gene>
    <name evidence="1" type="primary">rbfA</name>
    <name type="ordered locus">Gmet_1587</name>
</gene>
<feature type="chain" id="PRO_1000000113" description="Ribosome-binding factor A">
    <location>
        <begin position="1"/>
        <end position="118"/>
    </location>
</feature>
<proteinExistence type="inferred from homology"/>
<protein>
    <recommendedName>
        <fullName evidence="1">Ribosome-binding factor A</fullName>
    </recommendedName>
</protein>
<accession>Q39VA5</accession>
<reference key="1">
    <citation type="journal article" date="2009" name="BMC Microbiol.">
        <title>The genome sequence of Geobacter metallireducens: features of metabolism, physiology and regulation common and dissimilar to Geobacter sulfurreducens.</title>
        <authorList>
            <person name="Aklujkar M."/>
            <person name="Krushkal J."/>
            <person name="DiBartolo G."/>
            <person name="Lapidus A."/>
            <person name="Land M.L."/>
            <person name="Lovley D.R."/>
        </authorList>
    </citation>
    <scope>NUCLEOTIDE SEQUENCE [LARGE SCALE GENOMIC DNA]</scope>
    <source>
        <strain>ATCC 53774 / DSM 7210 / GS-15</strain>
    </source>
</reference>